<sequence length="553" mass="59754">MLSVRIAAAVARALPRRAGLVSKNALGSSFVGTRNLHASNTRLQKTGTAEMSSILEERILGADTSVDLEETGRVLSIGDGIARVHGLRNVQAEEMVEFSSGLKGMSLNLEPDNVGVVVFGNDKLIKEGDIVKRTGAIVDVPVGDELLGRVVDALGNAIDGKGPVGSKIRRRVGLKAPGIIPRISVREPMQTGIKAVDSLVPIGRGQRELIIGDRQTGKTSIAIDTIINQKRFNDGTDEKKKLYCIYVAIGQKRSTVAQLVKRLTDADAMKYTIVVSATASDAAPLQYLAPYSGCSMGEYFRDNGKHALIIYDDLSKQAVAYRQMSLLLRRPPGREAYPGDVFYLHSRLLERAAKMNDSFGGGSLTALPVIETQAGDVSAYIPTNVISITDGQIFLETELFYKGIRPAINVGLSVSRVGSAAQTRAMKQVAGTMKLELAQYREVAAFAQFGSDLDAATQQLLSRGVRLTELLKQGQYSPMAIEEQVAVIYAGVRGYLDKLEPSKITKFESAFLSHVVSQHQSLLGNIRSDGKISEQSDAKLKEIVTNFLAGFEP</sequence>
<keyword id="KW-0002">3D-structure</keyword>
<keyword id="KW-0007">Acetylation</keyword>
<keyword id="KW-0066">ATP synthesis</keyword>
<keyword id="KW-0067">ATP-binding</keyword>
<keyword id="KW-1003">Cell membrane</keyword>
<keyword id="KW-0139">CF(1)</keyword>
<keyword id="KW-0903">Direct protein sequencing</keyword>
<keyword id="KW-0325">Glycoprotein</keyword>
<keyword id="KW-0375">Hydrogen ion transport</keyword>
<keyword id="KW-0406">Ion transport</keyword>
<keyword id="KW-0460">Magnesium</keyword>
<keyword id="KW-0472">Membrane</keyword>
<keyword id="KW-0479">Metal-binding</keyword>
<keyword id="KW-0488">Methylation</keyword>
<keyword id="KW-0496">Mitochondrion</keyword>
<keyword id="KW-0999">Mitochondrion inner membrane</keyword>
<keyword id="KW-0547">Nucleotide-binding</keyword>
<keyword id="KW-0597">Phosphoprotein</keyword>
<keyword id="KW-1185">Reference proteome</keyword>
<keyword id="KW-0809">Transit peptide</keyword>
<keyword id="KW-0813">Transport</keyword>
<feature type="transit peptide" description="Mitochondrion" evidence="2">
    <location>
        <begin position="1"/>
        <end position="43"/>
    </location>
</feature>
<feature type="chain" id="PRO_0000002427" description="ATP synthase F(1) complex subunit alpha, mitochondrial">
    <location>
        <begin position="44"/>
        <end position="553"/>
    </location>
</feature>
<feature type="binding site" evidence="3">
    <location>
        <position position="215"/>
    </location>
    <ligand>
        <name>ATP</name>
        <dbReference type="ChEBI" id="CHEBI:30616"/>
        <note>ligand shared between homotrimeric partners</note>
    </ligand>
</feature>
<feature type="binding site" evidence="3">
    <location>
        <position position="217"/>
    </location>
    <ligand>
        <name>ATP</name>
        <dbReference type="ChEBI" id="CHEBI:30616"/>
        <note>ligand shared between homotrimeric partners</note>
    </ligand>
</feature>
<feature type="binding site" evidence="3">
    <location>
        <position position="218"/>
    </location>
    <ligand>
        <name>ATP</name>
        <dbReference type="ChEBI" id="CHEBI:30616"/>
        <note>ligand shared between homotrimeric partners</note>
    </ligand>
</feature>
<feature type="binding site" evidence="3">
    <location>
        <position position="219"/>
    </location>
    <ligand>
        <name>ATP</name>
        <dbReference type="ChEBI" id="CHEBI:30616"/>
        <note>ligand shared between homotrimeric partners</note>
    </ligand>
</feature>
<feature type="binding site" evidence="3">
    <location>
        <position position="219"/>
    </location>
    <ligand>
        <name>Mg(2+)</name>
        <dbReference type="ChEBI" id="CHEBI:18420"/>
        <note>ligand shared between homotrimeric partners</note>
    </ligand>
</feature>
<feature type="binding site" evidence="3">
    <location>
        <position position="220"/>
    </location>
    <ligand>
        <name>ATP</name>
        <dbReference type="ChEBI" id="CHEBI:30616"/>
        <note>ligand shared between homotrimeric partners</note>
    </ligand>
</feature>
<feature type="binding site" evidence="3">
    <location>
        <position position="312"/>
    </location>
    <ligand>
        <name>Mg(2+)</name>
        <dbReference type="ChEBI" id="CHEBI:18420"/>
        <note>ligand shared between homotrimeric partners</note>
    </ligand>
</feature>
<feature type="binding site" evidence="3">
    <location>
        <position position="473"/>
    </location>
    <ligand>
        <name>ATP</name>
        <dbReference type="ChEBI" id="CHEBI:30616"/>
        <note>ligand shared between homotrimeric partners</note>
    </ligand>
</feature>
<feature type="binding site" evidence="3">
    <location>
        <position position="475"/>
    </location>
    <ligand>
        <name>ATP</name>
        <dbReference type="ChEBI" id="CHEBI:30616"/>
        <note>ligand shared between homotrimeric partners</note>
    </ligand>
</feature>
<feature type="site" description="Required for activity" evidence="1">
    <location>
        <position position="413"/>
    </location>
</feature>
<feature type="modified residue" description="Phosphoserine" evidence="3">
    <location>
        <position position="53"/>
    </location>
</feature>
<feature type="modified residue" description="Phosphoserine" evidence="3">
    <location>
        <position position="65"/>
    </location>
</feature>
<feature type="modified residue" description="Phosphoserine; alternate" evidence="3">
    <location>
        <position position="76"/>
    </location>
</feature>
<feature type="modified residue" description="Phosphoserine" evidence="4">
    <location>
        <position position="106"/>
    </location>
</feature>
<feature type="modified residue" description="N6-acetyllysine" evidence="4">
    <location>
        <position position="123"/>
    </location>
</feature>
<feature type="modified residue" description="N6-acetyllysine" evidence="4">
    <location>
        <position position="126"/>
    </location>
</feature>
<feature type="modified residue" description="N6-acetyllysine" evidence="4">
    <location>
        <position position="132"/>
    </location>
</feature>
<feature type="modified residue" description="Phosphothreonine" evidence="13">
    <location>
        <position position="134"/>
    </location>
</feature>
<feature type="modified residue" description="N6-acetyllysine; alternate" evidence="3">
    <location>
        <position position="161"/>
    </location>
</feature>
<feature type="modified residue" description="N6-succinyllysine; alternate" evidence="4">
    <location>
        <position position="161"/>
    </location>
</feature>
<feature type="modified residue" description="Phosphoserine" evidence="3">
    <location>
        <position position="166"/>
    </location>
</feature>
<feature type="modified residue" description="N6-acetyllysine; alternate" evidence="4">
    <location>
        <position position="167"/>
    </location>
</feature>
<feature type="modified residue" description="N6-succinyllysine; alternate" evidence="4">
    <location>
        <position position="167"/>
    </location>
</feature>
<feature type="modified residue" description="Phosphoserine" evidence="3">
    <location>
        <position position="184"/>
    </location>
</feature>
<feature type="modified residue" description="Omega-N-methylarginine" evidence="4">
    <location>
        <position position="204"/>
    </location>
</feature>
<feature type="modified residue" description="N6-acetyllysine; alternate" evidence="4">
    <location>
        <position position="230"/>
    </location>
</feature>
<feature type="modified residue" description="N6-succinyllysine; alternate" evidence="4">
    <location>
        <position position="230"/>
    </location>
</feature>
<feature type="modified residue" description="N6-acetyllysine; alternate" evidence="4">
    <location>
        <position position="239"/>
    </location>
</feature>
<feature type="modified residue" description="N6-succinyllysine; alternate" evidence="4">
    <location>
        <position position="239"/>
    </location>
</feature>
<feature type="modified residue" description="N6-acetyllysine" evidence="4">
    <location>
        <position position="240"/>
    </location>
</feature>
<feature type="modified residue" description="N6-acetyllysine; alternate" evidence="3">
    <location>
        <position position="261"/>
    </location>
</feature>
<feature type="modified residue" description="N6-succinyllysine; alternate" evidence="4">
    <location>
        <position position="261"/>
    </location>
</feature>
<feature type="modified residue" description="N6-acetyllysine; alternate" evidence="4">
    <location>
        <position position="305"/>
    </location>
</feature>
<feature type="modified residue" description="N6-succinyllysine; alternate" evidence="4">
    <location>
        <position position="305"/>
    </location>
</feature>
<feature type="modified residue" description="N6-acetyllysine; alternate" evidence="4">
    <location>
        <position position="427"/>
    </location>
</feature>
<feature type="modified residue" description="N6-succinyllysine; alternate" evidence="4">
    <location>
        <position position="427"/>
    </location>
</feature>
<feature type="modified residue" description="N6-acetyllysine" evidence="3">
    <location>
        <position position="434"/>
    </location>
</feature>
<feature type="modified residue" description="N6-acetyllysine; alternate" evidence="3">
    <location>
        <position position="498"/>
    </location>
</feature>
<feature type="modified residue" description="N6-succinyllysine; alternate" evidence="4">
    <location>
        <position position="498"/>
    </location>
</feature>
<feature type="modified residue" description="N6-acetyllysine; alternate" evidence="3">
    <location>
        <position position="506"/>
    </location>
</feature>
<feature type="modified residue" description="N6-succinyllysine; alternate" evidence="4">
    <location>
        <position position="506"/>
    </location>
</feature>
<feature type="modified residue" description="N6-acetyllysine; alternate" evidence="4">
    <location>
        <position position="531"/>
    </location>
</feature>
<feature type="modified residue" description="N6-succinyllysine; alternate" evidence="4">
    <location>
        <position position="531"/>
    </location>
</feature>
<feature type="modified residue" description="N6-acetyllysine; alternate" evidence="3">
    <location>
        <position position="539"/>
    </location>
</feature>
<feature type="modified residue" description="N6-succinyllysine; alternate" evidence="4">
    <location>
        <position position="539"/>
    </location>
</feature>
<feature type="modified residue" description="N6-acetyllysine" evidence="4">
    <location>
        <position position="541"/>
    </location>
</feature>
<feature type="glycosylation site" description="O-linked (GlcNAc) serine; alternate" evidence="8">
    <location>
        <position position="76"/>
    </location>
</feature>
<feature type="sequence conflict" description="In Ref. 2; AAA40784." evidence="11" ref="2">
    <original>A</original>
    <variation>R</variation>
    <location>
        <position position="11"/>
    </location>
</feature>
<feature type="sequence conflict" description="In Ref. 4; CAA39599." evidence="11" ref="4">
    <original>Y</original>
    <variation>D</variation>
    <location>
        <position position="321"/>
    </location>
</feature>
<feature type="strand" evidence="14">
    <location>
        <begin position="56"/>
        <end position="58"/>
    </location>
</feature>
<feature type="strand" evidence="14">
    <location>
        <begin position="62"/>
        <end position="64"/>
    </location>
</feature>
<feature type="turn" evidence="14">
    <location>
        <begin position="68"/>
        <end position="70"/>
    </location>
</feature>
<feature type="strand" evidence="14">
    <location>
        <begin position="71"/>
        <end position="74"/>
    </location>
</feature>
<feature type="strand" evidence="14">
    <location>
        <begin position="78"/>
        <end position="80"/>
    </location>
</feature>
<feature type="strand" evidence="15">
    <location>
        <begin position="81"/>
        <end position="84"/>
    </location>
</feature>
<feature type="strand" evidence="14">
    <location>
        <begin position="94"/>
        <end position="97"/>
    </location>
</feature>
<feature type="strand" evidence="14">
    <location>
        <begin position="103"/>
        <end position="106"/>
    </location>
</feature>
<feature type="strand" evidence="14">
    <location>
        <begin position="116"/>
        <end position="120"/>
    </location>
</feature>
<feature type="strand" evidence="14">
    <location>
        <begin position="130"/>
        <end position="132"/>
    </location>
</feature>
<feature type="strand" evidence="14">
    <location>
        <begin position="136"/>
        <end position="144"/>
    </location>
</feature>
<feature type="turn" evidence="14">
    <location>
        <begin position="145"/>
        <end position="148"/>
    </location>
</feature>
<feature type="strand" evidence="14">
    <location>
        <begin position="149"/>
        <end position="151"/>
    </location>
</feature>
<feature type="strand" evidence="14">
    <location>
        <begin position="153"/>
        <end position="155"/>
    </location>
</feature>
<feature type="strand" evidence="14">
    <location>
        <begin position="159"/>
        <end position="161"/>
    </location>
</feature>
<feature type="strand" evidence="14">
    <location>
        <begin position="167"/>
        <end position="172"/>
    </location>
</feature>
<feature type="turn" evidence="14">
    <location>
        <begin position="179"/>
        <end position="181"/>
    </location>
</feature>
<feature type="helix" evidence="14">
    <location>
        <begin position="194"/>
        <end position="197"/>
    </location>
</feature>
<feature type="strand" evidence="14">
    <location>
        <begin position="209"/>
        <end position="217"/>
    </location>
</feature>
<feature type="helix" evidence="14">
    <location>
        <begin position="218"/>
        <end position="227"/>
    </location>
</feature>
<feature type="helix" evidence="14">
    <location>
        <begin position="228"/>
        <end position="230"/>
    </location>
</feature>
<feature type="turn" evidence="14">
    <location>
        <begin position="231"/>
        <end position="234"/>
    </location>
</feature>
<feature type="strand" evidence="14">
    <location>
        <begin position="243"/>
        <end position="250"/>
    </location>
</feature>
<feature type="helix" evidence="14">
    <location>
        <begin position="255"/>
        <end position="265"/>
    </location>
</feature>
<feature type="helix" evidence="14">
    <location>
        <begin position="268"/>
        <end position="271"/>
    </location>
</feature>
<feature type="strand" evidence="14">
    <location>
        <begin position="272"/>
        <end position="278"/>
    </location>
</feature>
<feature type="helix" evidence="14">
    <location>
        <begin position="285"/>
        <end position="288"/>
    </location>
</feature>
<feature type="helix" evidence="14">
    <location>
        <begin position="290"/>
        <end position="300"/>
    </location>
</feature>
<feature type="strand" evidence="14">
    <location>
        <begin position="307"/>
        <end position="312"/>
    </location>
</feature>
<feature type="helix" evidence="14">
    <location>
        <begin position="314"/>
        <end position="327"/>
    </location>
</feature>
<feature type="helix" evidence="14">
    <location>
        <begin position="342"/>
        <end position="345"/>
    </location>
</feature>
<feature type="helix" evidence="14">
    <location>
        <begin position="349"/>
        <end position="351"/>
    </location>
</feature>
<feature type="turn" evidence="14">
    <location>
        <begin position="357"/>
        <end position="359"/>
    </location>
</feature>
<feature type="strand" evidence="14">
    <location>
        <begin position="365"/>
        <end position="373"/>
    </location>
</feature>
<feature type="helix" evidence="14">
    <location>
        <begin position="382"/>
        <end position="386"/>
    </location>
</feature>
<feature type="strand" evidence="14">
    <location>
        <begin position="392"/>
        <end position="395"/>
    </location>
</feature>
<feature type="helix" evidence="14">
    <location>
        <begin position="397"/>
        <end position="400"/>
    </location>
</feature>
<feature type="helix" evidence="14">
    <location>
        <begin position="418"/>
        <end position="420"/>
    </location>
</feature>
<feature type="turn" evidence="14">
    <location>
        <begin position="424"/>
        <end position="429"/>
    </location>
</feature>
<feature type="helix" evidence="14">
    <location>
        <begin position="430"/>
        <end position="443"/>
    </location>
</feature>
<feature type="turn" evidence="14">
    <location>
        <begin position="444"/>
        <end position="446"/>
    </location>
</feature>
<feature type="helix" evidence="14">
    <location>
        <begin position="447"/>
        <end position="449"/>
    </location>
</feature>
<feature type="strand" evidence="15">
    <location>
        <begin position="451"/>
        <end position="453"/>
    </location>
</feature>
<feature type="helix" evidence="14">
    <location>
        <begin position="455"/>
        <end position="457"/>
    </location>
</feature>
<feature type="helix" evidence="14">
    <location>
        <begin position="458"/>
        <end position="471"/>
    </location>
</feature>
<feature type="helix" evidence="14">
    <location>
        <begin position="481"/>
        <end position="492"/>
    </location>
</feature>
<feature type="helix" evidence="14">
    <location>
        <begin position="504"/>
        <end position="518"/>
    </location>
</feature>
<feature type="helix" evidence="14">
    <location>
        <begin position="520"/>
        <end position="526"/>
    </location>
</feature>
<feature type="turn" evidence="14">
    <location>
        <begin position="527"/>
        <end position="529"/>
    </location>
</feature>
<feature type="helix" evidence="14">
    <location>
        <begin position="534"/>
        <end position="548"/>
    </location>
</feature>
<accession>P15999</accession>
<accession>Q6P753</accession>
<comment type="function">
    <text evidence="2 3">Subunit alpha, of the mitochondrial membrane ATP synthase complex (F(1)F(0) ATP synthase or Complex V) that produces ATP from ADP in the presence of a proton gradient across the membrane which is generated by electron transport complexes of the respiratory chain. ATP synthase complex consist of a soluble F(1) head domain - the catalytic core - and a membrane F(1) domain - the membrane proton channel. These two domains are linked by a central stalk rotating inside the F(1) region and a stationary peripheral stalk. During catalysis, ATP synthesis in the catalytic domain of F(1) is coupled via a rotary mechanism of the central stalk subunits to proton translocation (By similarity). In vivo, can only synthesize ATP although its ATP hydrolase activity can be activated artificially in vitro (By similarity). With the catalytic subunit beta (ATP5F1B), forms the catalytic core in the F(1) domain. Subunit alpha does not bear the catalytic high-affinity ATP-binding sites (By similarity).</text>
</comment>
<comment type="subunit">
    <text evidence="3 4 5 7 9 10">Homotrimer (By similarity). Component of the ATP synthase complex composed at least of ATP5F1A/subunit alpha, ATP5F1B/subunit beta, ATP5MC1/subunit c (homooctomer), MT-ATP6/subunit a, MT-ATP8/subunit 8, ATP5ME/subunit e, ATP5MF/subunit f, ATP5MG/subunit g, ATP5MK/subunit k, ATP5MJ/subunit j, ATP5F1C/subunit gamma, ATP5F1D/subunit delta, ATP5F1E/subunit epsilon, ATP5PF/subunit F6, ATP5PB/subunit b, ATP5PD/subunit d, ATP5PO/subunit OSCP (PubMed:17575325). ATP synthase complex consists of a soluble F(1) head domain (subunits alpha(3) and beta(3)) - the catalytic core - and a membrane F(0) domain - the membrane proton channel (subunits c, a, 8, e, f, g, k and j) (PubMed:17575325, PubMed:9736690). These two domains are linked by a central stalk (subunits gamma, delta, and epsilon) rotating inside the F1 region and a stationary peripheral stalk (subunits F6, b, d, and OSCP). Interacts with ATPAF2. Interacts with HRG; the interaction occurs on the surface of T-cells and alters the cell morphology when associated with concanavalin (in vitro). Interacts with PLG (angiostatin peptide); the interaction inhibits most of the angiogenic properties of angiostatin. Interacts with BLOC1S1 (By similarity). Interacts with BCL2L1 isoform BCL-X(L); the interaction mediates the association of BCL2L1 isoform BCL-X(L) with the mitochondrial membrane F(1)F(0) ATP synthase and enhances neurons metabolic efficiency (PubMed:21926988). Interacts with CLN5 and PPT1. Interacts with S100A1; this interaction increases F1-ATPase activity (By similarity). Interacts with ABCB7; this interaction allows the regulation of cellular iron homeostasis and cellular reactive oxygen species (ROS) levels in cardiomyocytes (PubMed:31511561).</text>
</comment>
<comment type="subcellular location">
    <subcellularLocation>
        <location evidence="5">Mitochondrion</location>
    </subcellularLocation>
    <subcellularLocation>
        <location evidence="2">Mitochondrion inner membrane</location>
        <topology evidence="2">Peripheral membrane protein</topology>
        <orientation evidence="2">Matrix side</orientation>
    </subcellularLocation>
    <subcellularLocation>
        <location evidence="3">Cell membrane</location>
        <topology evidence="3">Peripheral membrane protein</topology>
        <orientation evidence="3">Extracellular side</orientation>
    </subcellularLocation>
    <text evidence="3">Colocalizes with HRG on the cell surface of T-cells.</text>
</comment>
<comment type="tissue specificity">
    <text evidence="6">Expressed in flagella of epididymal sperm.</text>
</comment>
<comment type="PTM">
    <text evidence="3">Acetylated on lysine residues. BLOC1S1 is required for acetylation.</text>
</comment>
<comment type="miscellaneous">
    <text evidence="3">The siderophore enterobactin (Ent) produced by enteric bacteria binds Fe(3+) and helps bacteria scavenge iron ions from the environment. As a consequence, the mammalian siderocalin LCN2 plays an important role in defense against bacterial infections by sequestering iron bound to microbial siderophores. LCN2 can also bind iron bound to endogenous or nutrient-derived iron chelators and plays an important role in cellular iron homeostasis. Enterobactin produced by non-pathogenic E.coli strains can facilitate mitochondrial iron assimilation, suggesting that iron bound to siderophores from non-pathogenic bacteria may contribute to iron absorption by the host.</text>
</comment>
<comment type="similarity">
    <text evidence="11">Belongs to the ATPase alpha/beta chains family.</text>
</comment>
<reference key="1">
    <citation type="journal article" date="2004" name="Genome Res.">
        <title>The status, quality, and expansion of the NIH full-length cDNA project: the Mammalian Gene Collection (MGC).</title>
        <authorList>
            <consortium name="The MGC Project Team"/>
        </authorList>
    </citation>
    <scope>NUCLEOTIDE SEQUENCE [LARGE SCALE MRNA]</scope>
    <source>
        <tissue>Prostate</tissue>
    </source>
</reference>
<reference key="2">
    <citation type="journal article" date="1990" name="J. Biol. Chem.">
        <title>Mitochondrial ATP synthase. cDNA cloning, amino acid sequence, overexpression, and properties of the rat liver alpha subunit.</title>
        <authorList>
            <person name="Lee J.H."/>
            <person name="Garboczi D.N."/>
            <person name="Thomas P.J."/>
            <person name="Pedersen P.L."/>
        </authorList>
    </citation>
    <scope>NUCLEOTIDE SEQUENCE [MRNA] OF 11-553</scope>
    <source>
        <tissue>Liver</tissue>
    </source>
</reference>
<reference key="3">
    <citation type="submission" date="2007-07" db="UniProtKB">
        <authorList>
            <person name="Lubec G."/>
            <person name="Afjehi-Sadat L."/>
            <person name="Chen W.-Q."/>
            <person name="Kang S.U."/>
        </authorList>
    </citation>
    <scope>PROTEIN SEQUENCE OF 46-58; 104-123; 134-161; 195-204; 335-347; 403-416; 435-463; 467-493; 507-527 AND 540-553</scope>
    <scope>IDENTIFICATION BY MASS SPECTROMETRY</scope>
    <source>
        <strain>Sprague-Dawley</strain>
        <tissue>Brain</tissue>
        <tissue>Hippocampus</tissue>
        <tissue>Spinal cord</tissue>
    </source>
</reference>
<reference key="4">
    <citation type="submission" date="1990-10" db="EMBL/GenBank/DDBJ databases">
        <authorList>
            <person name="Frey B.A.J."/>
            <person name="Weber F.E."/>
            <person name="Fett R."/>
            <person name="Pette D."/>
        </authorList>
    </citation>
    <scope>NUCLEOTIDE SEQUENCE [MRNA] OF 319-553</scope>
    <source>
        <tissue>Muscle</tissue>
    </source>
</reference>
<reference key="5">
    <citation type="journal article" date="2007" name="Mol. Cell. Proteomics">
        <title>Identification of two proteins associated with mammalian ATP synthase.</title>
        <authorList>
            <person name="Meyer B."/>
            <person name="Wittig I."/>
            <person name="Trifilieff E."/>
            <person name="Karas M."/>
            <person name="Schaegger H."/>
        </authorList>
    </citation>
    <scope>IDENTIFICATION BY MASS SPECTROMETRY</scope>
    <scope>IDENTIFICATION IN THE ATP SYNTHASE COMPLEX</scope>
    <scope>SUBCELLULAR LOCATION</scope>
</reference>
<reference key="6">
    <citation type="journal article" date="2009" name="Reproduction">
        <title>Identification of novel immunodominant epididymal sperm proteins using combinatorial approach.</title>
        <authorList>
            <person name="Khan S.A."/>
            <person name="Suryawanshi A.R."/>
            <person name="Ranpura S.A."/>
            <person name="Jadhav S.V."/>
            <person name="Khole V.V."/>
        </authorList>
    </citation>
    <scope>IDENTIFICATION BY MASS SPECTROMETRY</scope>
    <scope>TISSUE SPECIFICITY</scope>
</reference>
<reference key="7">
    <citation type="journal article" date="2011" name="Nat. Cell Biol.">
        <title>Bcl-xL regulates metabolic efficiency of neurons through interaction with the mitochondrial F1FO ATP synthase.</title>
        <authorList>
            <person name="Alavian K.N."/>
            <person name="Li H."/>
            <person name="Collis L."/>
            <person name="Bonanni L."/>
            <person name="Zeng L."/>
            <person name="Sacchetti S."/>
            <person name="Lazrove E."/>
            <person name="Nabili P."/>
            <person name="Flaherty B."/>
            <person name="Graham M."/>
            <person name="Chen Y."/>
            <person name="Messerli S.M."/>
            <person name="Mariggio M.A."/>
            <person name="Rahner C."/>
            <person name="McNay E."/>
            <person name="Shore G.C."/>
            <person name="Smith P.J."/>
            <person name="Hardwick J.M."/>
            <person name="Jonas E.A."/>
        </authorList>
    </citation>
    <scope>INTERACTION WITH BCL2L1</scope>
</reference>
<reference key="8">
    <citation type="journal article" date="2012" name="Nat. Commun.">
        <title>Quantitative maps of protein phosphorylation sites across 14 different rat organs and tissues.</title>
        <authorList>
            <person name="Lundby A."/>
            <person name="Secher A."/>
            <person name="Lage K."/>
            <person name="Nordsborg N.B."/>
            <person name="Dmytriyev A."/>
            <person name="Lundby C."/>
            <person name="Olsen J.V."/>
        </authorList>
    </citation>
    <scope>PHOSPHORYLATION [LARGE SCALE ANALYSIS] AT THR-134</scope>
    <scope>IDENTIFICATION BY MASS SPECTROMETRY [LARGE SCALE ANALYSIS]</scope>
</reference>
<reference key="9">
    <citation type="journal article" date="2013" name="PLoS ONE">
        <title>Discovery and confirmation of O-GlcNAcylated proteins in rat liver mitochondria by combination of mass spectrometry and immunological methods.</title>
        <authorList>
            <person name="Cao W."/>
            <person name="Cao J."/>
            <person name="Huang J."/>
            <person name="Yao J."/>
            <person name="Yan G."/>
            <person name="Xu H."/>
            <person name="Yang P."/>
        </authorList>
    </citation>
    <scope>GLYCOSYLATION AT SER-76</scope>
</reference>
<reference key="10">
    <citation type="journal article" date="2019" name="Sci. Rep.">
        <title>Chronic Pressure Overload Results in Deficiency of Mitochondrial Membrane Transporter ABCB7 Which Contributes to Iron Overload, Mitochondrial Dysfunction, Metabolic Shift and Worsens Cardiac Function.</title>
        <authorList>
            <person name="Kumar V."/>
            <person name="Kumar A."/>
            <person name="Sanawar R."/>
            <person name="Jaleel A."/>
            <person name="Santhosh Kumar T.R."/>
            <person name="Kartha C.C."/>
        </authorList>
    </citation>
    <scope>INTERACTION WITH ABCB7</scope>
</reference>
<reference key="11">
    <citation type="journal article" date="1998" name="Proc. Natl. Acad. Sci. U.S.A.">
        <title>The 2.8-A structure of rat liver F1-ATPase: configuration of a critical intermediate in ATP synthesis/hydrolysis.</title>
        <authorList>
            <person name="Bianchet M.A."/>
            <person name="Hullihen J."/>
            <person name="Pedersen P.L."/>
            <person name="Amzel L.M."/>
        </authorList>
    </citation>
    <scope>X-RAY CRYSTALLOGRAPHY (2.8 ANGSTROMS) OF 44-553</scope>
    <scope>SUBUNIT</scope>
</reference>
<organism>
    <name type="scientific">Rattus norvegicus</name>
    <name type="common">Rat</name>
    <dbReference type="NCBI Taxonomy" id="10116"/>
    <lineage>
        <taxon>Eukaryota</taxon>
        <taxon>Metazoa</taxon>
        <taxon>Chordata</taxon>
        <taxon>Craniata</taxon>
        <taxon>Vertebrata</taxon>
        <taxon>Euteleostomi</taxon>
        <taxon>Mammalia</taxon>
        <taxon>Eutheria</taxon>
        <taxon>Euarchontoglires</taxon>
        <taxon>Glires</taxon>
        <taxon>Rodentia</taxon>
        <taxon>Myomorpha</taxon>
        <taxon>Muroidea</taxon>
        <taxon>Muridae</taxon>
        <taxon>Murinae</taxon>
        <taxon>Rattus</taxon>
    </lineage>
</organism>
<name>ATPA_RAT</name>
<proteinExistence type="evidence at protein level"/>
<protein>
    <recommendedName>
        <fullName evidence="11">ATP synthase F(1) complex subunit alpha, mitochondrial</fullName>
    </recommendedName>
    <alternativeName>
        <fullName evidence="3">ATP synthase F1 subunit alpha</fullName>
    </alternativeName>
</protein>
<dbReference type="EMBL" id="BC061830">
    <property type="protein sequence ID" value="AAH61830.1"/>
    <property type="molecule type" value="mRNA"/>
</dbReference>
<dbReference type="EMBL" id="J05266">
    <property type="protein sequence ID" value="AAA40784.1"/>
    <property type="molecule type" value="mRNA"/>
</dbReference>
<dbReference type="EMBL" id="X56133">
    <property type="protein sequence ID" value="CAA39599.1"/>
    <property type="molecule type" value="mRNA"/>
</dbReference>
<dbReference type="PIR" id="A35730">
    <property type="entry name" value="A35730"/>
</dbReference>
<dbReference type="RefSeq" id="NP_075581.1">
    <property type="nucleotide sequence ID" value="NM_023093.1"/>
</dbReference>
<dbReference type="PDB" id="1MAB">
    <property type="method" value="X-ray"/>
    <property type="resolution" value="2.80 A"/>
    <property type="chains" value="A=44-553"/>
</dbReference>
<dbReference type="PDB" id="2F43">
    <property type="method" value="X-ray"/>
    <property type="resolution" value="3.00 A"/>
    <property type="chains" value="A=44-553"/>
</dbReference>
<dbReference type="PDBsum" id="1MAB"/>
<dbReference type="PDBsum" id="2F43"/>
<dbReference type="SMR" id="P15999"/>
<dbReference type="BioGRID" id="249327">
    <property type="interactions" value="10"/>
</dbReference>
<dbReference type="CORUM" id="P15999"/>
<dbReference type="FunCoup" id="P15999">
    <property type="interactions" value="2209"/>
</dbReference>
<dbReference type="IntAct" id="P15999">
    <property type="interactions" value="13"/>
</dbReference>
<dbReference type="MINT" id="P15999"/>
<dbReference type="STRING" id="10116.ENSRNOP00000022892"/>
<dbReference type="ChEMBL" id="CHEMBL2176795"/>
<dbReference type="CarbonylDB" id="P15999"/>
<dbReference type="GlyCosmos" id="P15999">
    <property type="glycosylation" value="1 site, No reported glycans"/>
</dbReference>
<dbReference type="GlyGen" id="P15999">
    <property type="glycosylation" value="19 sites, 1 O-linked glycan (19 sites)"/>
</dbReference>
<dbReference type="iPTMnet" id="P15999"/>
<dbReference type="PhosphoSitePlus" id="P15999"/>
<dbReference type="SwissPalm" id="P15999"/>
<dbReference type="jPOST" id="P15999"/>
<dbReference type="PaxDb" id="10116-ENSRNOP00000022892"/>
<dbReference type="Ensembl" id="ENSRNOT00000022892.6">
    <property type="protein sequence ID" value="ENSRNOP00000022892.4"/>
    <property type="gene ID" value="ENSRNOG00000017032.6"/>
</dbReference>
<dbReference type="GeneID" id="65262"/>
<dbReference type="KEGG" id="rno:65262"/>
<dbReference type="AGR" id="RGD:619993"/>
<dbReference type="CTD" id="498"/>
<dbReference type="RGD" id="619993">
    <property type="gene designation" value="Atp5f1a"/>
</dbReference>
<dbReference type="eggNOG" id="KOG1353">
    <property type="taxonomic scope" value="Eukaryota"/>
</dbReference>
<dbReference type="GeneTree" id="ENSGT00550000074846"/>
<dbReference type="InParanoid" id="P15999"/>
<dbReference type="OMA" id="INQRDNW"/>
<dbReference type="OrthoDB" id="9805536at2759"/>
<dbReference type="PhylomeDB" id="P15999"/>
<dbReference type="Reactome" id="R-RNO-163210">
    <property type="pathway name" value="Formation of ATP by chemiosmotic coupling"/>
</dbReference>
<dbReference type="Reactome" id="R-RNO-8949613">
    <property type="pathway name" value="Cristae formation"/>
</dbReference>
<dbReference type="Reactome" id="R-RNO-9837999">
    <property type="pathway name" value="Mitochondrial protein degradation"/>
</dbReference>
<dbReference type="EvolutionaryTrace" id="P15999"/>
<dbReference type="PRO" id="PR:P15999"/>
<dbReference type="Proteomes" id="UP000002494">
    <property type="component" value="Chromosome 18"/>
</dbReference>
<dbReference type="GO" id="GO:0009986">
    <property type="term" value="C:cell surface"/>
    <property type="evidence" value="ECO:0000314"/>
    <property type="project" value="RGD"/>
</dbReference>
<dbReference type="GO" id="GO:0016020">
    <property type="term" value="C:membrane"/>
    <property type="evidence" value="ECO:0000266"/>
    <property type="project" value="RGD"/>
</dbReference>
<dbReference type="GO" id="GO:0045121">
    <property type="term" value="C:membrane raft"/>
    <property type="evidence" value="ECO:0000314"/>
    <property type="project" value="CAFA"/>
</dbReference>
<dbReference type="GO" id="GO:0005743">
    <property type="term" value="C:mitochondrial inner membrane"/>
    <property type="evidence" value="ECO:0000314"/>
    <property type="project" value="RGD"/>
</dbReference>
<dbReference type="GO" id="GO:0005739">
    <property type="term" value="C:mitochondrion"/>
    <property type="evidence" value="ECO:0000266"/>
    <property type="project" value="RGD"/>
</dbReference>
<dbReference type="GO" id="GO:0005886">
    <property type="term" value="C:plasma membrane"/>
    <property type="evidence" value="ECO:0000266"/>
    <property type="project" value="RGD"/>
</dbReference>
<dbReference type="GO" id="GO:0045259">
    <property type="term" value="C:proton-transporting ATP synthase complex"/>
    <property type="evidence" value="ECO:0000314"/>
    <property type="project" value="UniProtKB"/>
</dbReference>
<dbReference type="GO" id="GO:0043531">
    <property type="term" value="F:ADP binding"/>
    <property type="evidence" value="ECO:0000314"/>
    <property type="project" value="RGD"/>
</dbReference>
<dbReference type="GO" id="GO:0043532">
    <property type="term" value="F:angiostatin binding"/>
    <property type="evidence" value="ECO:0000266"/>
    <property type="project" value="RGD"/>
</dbReference>
<dbReference type="GO" id="GO:0005524">
    <property type="term" value="F:ATP binding"/>
    <property type="evidence" value="ECO:0000314"/>
    <property type="project" value="RGD"/>
</dbReference>
<dbReference type="GO" id="GO:0042288">
    <property type="term" value="F:MHC class I protein binding"/>
    <property type="evidence" value="ECO:0000266"/>
    <property type="project" value="RGD"/>
</dbReference>
<dbReference type="GO" id="GO:0002020">
    <property type="term" value="F:protease binding"/>
    <property type="evidence" value="ECO:0000353"/>
    <property type="project" value="RGD"/>
</dbReference>
<dbReference type="GO" id="GO:0046933">
    <property type="term" value="F:proton-transporting ATP synthase activity, rotational mechanism"/>
    <property type="evidence" value="ECO:0000266"/>
    <property type="project" value="RGD"/>
</dbReference>
<dbReference type="GO" id="GO:0006754">
    <property type="term" value="P:ATP biosynthetic process"/>
    <property type="evidence" value="ECO:0000266"/>
    <property type="project" value="RGD"/>
</dbReference>
<dbReference type="GO" id="GO:0071549">
    <property type="term" value="P:cellular response to dexamethasone stimulus"/>
    <property type="evidence" value="ECO:0000270"/>
    <property type="project" value="RGD"/>
</dbReference>
<dbReference type="GO" id="GO:0071732">
    <property type="term" value="P:cellular response to nitric oxide"/>
    <property type="evidence" value="ECO:0000270"/>
    <property type="project" value="RGD"/>
</dbReference>
<dbReference type="GO" id="GO:0006629">
    <property type="term" value="P:lipid metabolic process"/>
    <property type="evidence" value="ECO:0000266"/>
    <property type="project" value="RGD"/>
</dbReference>
<dbReference type="GO" id="GO:0001937">
    <property type="term" value="P:negative regulation of endothelial cell proliferation"/>
    <property type="evidence" value="ECO:0000266"/>
    <property type="project" value="RGD"/>
</dbReference>
<dbReference type="GO" id="GO:0043536">
    <property type="term" value="P:positive regulation of blood vessel endothelial cell migration"/>
    <property type="evidence" value="ECO:0000266"/>
    <property type="project" value="RGD"/>
</dbReference>
<dbReference type="GO" id="GO:0015986">
    <property type="term" value="P:proton motive force-driven ATP synthesis"/>
    <property type="evidence" value="ECO:0000250"/>
    <property type="project" value="UniProtKB"/>
</dbReference>
<dbReference type="GO" id="GO:0042776">
    <property type="term" value="P:proton motive force-driven mitochondrial ATP synthesis"/>
    <property type="evidence" value="ECO:0000266"/>
    <property type="project" value="RGD"/>
</dbReference>
<dbReference type="GO" id="GO:0045471">
    <property type="term" value="P:response to ethanol"/>
    <property type="evidence" value="ECO:0000270"/>
    <property type="project" value="RGD"/>
</dbReference>
<dbReference type="GO" id="GO:0014850">
    <property type="term" value="P:response to muscle activity"/>
    <property type="evidence" value="ECO:0000270"/>
    <property type="project" value="RGD"/>
</dbReference>
<dbReference type="CDD" id="cd18113">
    <property type="entry name" value="ATP-synt_F1_alpha_C"/>
    <property type="match status" value="1"/>
</dbReference>
<dbReference type="CDD" id="cd18116">
    <property type="entry name" value="ATP-synt_F1_alpha_N"/>
    <property type="match status" value="1"/>
</dbReference>
<dbReference type="CDD" id="cd01132">
    <property type="entry name" value="F1-ATPase_alpha_CD"/>
    <property type="match status" value="1"/>
</dbReference>
<dbReference type="FunFam" id="1.20.150.20:FF:000001">
    <property type="entry name" value="ATP synthase subunit alpha"/>
    <property type="match status" value="1"/>
</dbReference>
<dbReference type="FunFam" id="2.40.30.20:FF:000001">
    <property type="entry name" value="ATP synthase subunit alpha"/>
    <property type="match status" value="1"/>
</dbReference>
<dbReference type="FunFam" id="3.40.50.300:FF:002432">
    <property type="entry name" value="ATP synthase subunit alpha, mitochondrial"/>
    <property type="match status" value="1"/>
</dbReference>
<dbReference type="Gene3D" id="2.40.30.20">
    <property type="match status" value="1"/>
</dbReference>
<dbReference type="Gene3D" id="1.20.150.20">
    <property type="entry name" value="ATP synthase alpha/beta chain, C-terminal domain"/>
    <property type="match status" value="1"/>
</dbReference>
<dbReference type="Gene3D" id="3.40.50.300">
    <property type="entry name" value="P-loop containing nucleotide triphosphate hydrolases"/>
    <property type="match status" value="1"/>
</dbReference>
<dbReference type="HAMAP" id="MF_01346">
    <property type="entry name" value="ATP_synth_alpha_bact"/>
    <property type="match status" value="1"/>
</dbReference>
<dbReference type="InterPro" id="IPR023366">
    <property type="entry name" value="ATP_synth_asu-like_sf"/>
</dbReference>
<dbReference type="InterPro" id="IPR000793">
    <property type="entry name" value="ATP_synth_asu_C"/>
</dbReference>
<dbReference type="InterPro" id="IPR038376">
    <property type="entry name" value="ATP_synth_asu_C_sf"/>
</dbReference>
<dbReference type="InterPro" id="IPR033732">
    <property type="entry name" value="ATP_synth_F1_a_nt-bd_dom"/>
</dbReference>
<dbReference type="InterPro" id="IPR005294">
    <property type="entry name" value="ATP_synth_F1_asu"/>
</dbReference>
<dbReference type="InterPro" id="IPR020003">
    <property type="entry name" value="ATPase_a/bsu_AS"/>
</dbReference>
<dbReference type="InterPro" id="IPR004100">
    <property type="entry name" value="ATPase_F1/V1/A1_a/bsu_N"/>
</dbReference>
<dbReference type="InterPro" id="IPR036121">
    <property type="entry name" value="ATPase_F1/V1/A1_a/bsu_N_sf"/>
</dbReference>
<dbReference type="InterPro" id="IPR000194">
    <property type="entry name" value="ATPase_F1/V1/A1_a/bsu_nucl-bd"/>
</dbReference>
<dbReference type="InterPro" id="IPR027417">
    <property type="entry name" value="P-loop_NTPase"/>
</dbReference>
<dbReference type="NCBIfam" id="TIGR00962">
    <property type="entry name" value="atpA"/>
    <property type="match status" value="1"/>
</dbReference>
<dbReference type="NCBIfam" id="NF009884">
    <property type="entry name" value="PRK13343.1"/>
    <property type="match status" value="1"/>
</dbReference>
<dbReference type="PANTHER" id="PTHR48082">
    <property type="entry name" value="ATP SYNTHASE SUBUNIT ALPHA, MITOCHONDRIAL"/>
    <property type="match status" value="1"/>
</dbReference>
<dbReference type="PANTHER" id="PTHR48082:SF2">
    <property type="entry name" value="ATP SYNTHASE SUBUNIT ALPHA, MITOCHONDRIAL"/>
    <property type="match status" value="1"/>
</dbReference>
<dbReference type="Pfam" id="PF00006">
    <property type="entry name" value="ATP-synt_ab"/>
    <property type="match status" value="1"/>
</dbReference>
<dbReference type="Pfam" id="PF00306">
    <property type="entry name" value="ATP-synt_ab_C"/>
    <property type="match status" value="1"/>
</dbReference>
<dbReference type="Pfam" id="PF02874">
    <property type="entry name" value="ATP-synt_ab_N"/>
    <property type="match status" value="1"/>
</dbReference>
<dbReference type="PIRSF" id="PIRSF039088">
    <property type="entry name" value="F_ATPase_subunit_alpha"/>
    <property type="match status" value="1"/>
</dbReference>
<dbReference type="SUPFAM" id="SSF47917">
    <property type="entry name" value="C-terminal domain of alpha and beta subunits of F1 ATP synthase"/>
    <property type="match status" value="1"/>
</dbReference>
<dbReference type="SUPFAM" id="SSF50615">
    <property type="entry name" value="N-terminal domain of alpha and beta subunits of F1 ATP synthase"/>
    <property type="match status" value="1"/>
</dbReference>
<dbReference type="SUPFAM" id="SSF52540">
    <property type="entry name" value="P-loop containing nucleoside triphosphate hydrolases"/>
    <property type="match status" value="1"/>
</dbReference>
<dbReference type="PROSITE" id="PS00152">
    <property type="entry name" value="ATPASE_ALPHA_BETA"/>
    <property type="match status" value="1"/>
</dbReference>
<evidence type="ECO:0000250" key="1"/>
<evidence type="ECO:0000250" key="2">
    <source>
        <dbReference type="UniProtKB" id="P19483"/>
    </source>
</evidence>
<evidence type="ECO:0000250" key="3">
    <source>
        <dbReference type="UniProtKB" id="P25705"/>
    </source>
</evidence>
<evidence type="ECO:0000250" key="4">
    <source>
        <dbReference type="UniProtKB" id="Q03265"/>
    </source>
</evidence>
<evidence type="ECO:0000269" key="5">
    <source>
    </source>
</evidence>
<evidence type="ECO:0000269" key="6">
    <source>
    </source>
</evidence>
<evidence type="ECO:0000269" key="7">
    <source>
    </source>
</evidence>
<evidence type="ECO:0000269" key="8">
    <source>
    </source>
</evidence>
<evidence type="ECO:0000269" key="9">
    <source>
    </source>
</evidence>
<evidence type="ECO:0000269" key="10">
    <source>
    </source>
</evidence>
<evidence type="ECO:0000305" key="11"/>
<evidence type="ECO:0000312" key="12">
    <source>
        <dbReference type="RGD" id="619993"/>
    </source>
</evidence>
<evidence type="ECO:0007744" key="13">
    <source>
    </source>
</evidence>
<evidence type="ECO:0007829" key="14">
    <source>
        <dbReference type="PDB" id="1MAB"/>
    </source>
</evidence>
<evidence type="ECO:0007829" key="15">
    <source>
        <dbReference type="PDB" id="2F43"/>
    </source>
</evidence>
<gene>
    <name evidence="12" type="primary">Atp5f1a</name>
    <name type="synonym">Atp5a1</name>
</gene>